<protein>
    <recommendedName>
        <fullName evidence="1">Large ribosomal subunit protein uL4</fullName>
    </recommendedName>
    <alternativeName>
        <fullName evidence="3">50S ribosomal protein L4</fullName>
    </alternativeName>
</protein>
<feature type="chain" id="PRO_1000052394" description="Large ribosomal subunit protein uL4">
    <location>
        <begin position="1"/>
        <end position="202"/>
    </location>
</feature>
<feature type="region of interest" description="Disordered" evidence="2">
    <location>
        <begin position="47"/>
        <end position="67"/>
    </location>
</feature>
<organism>
    <name type="scientific">Dichelobacter nodosus (strain VCS1703A)</name>
    <dbReference type="NCBI Taxonomy" id="246195"/>
    <lineage>
        <taxon>Bacteria</taxon>
        <taxon>Pseudomonadati</taxon>
        <taxon>Pseudomonadota</taxon>
        <taxon>Gammaproteobacteria</taxon>
        <taxon>Cardiobacteriales</taxon>
        <taxon>Cardiobacteriaceae</taxon>
        <taxon>Dichelobacter</taxon>
    </lineage>
</organism>
<name>RL4_DICNV</name>
<evidence type="ECO:0000255" key="1">
    <source>
        <dbReference type="HAMAP-Rule" id="MF_01328"/>
    </source>
</evidence>
<evidence type="ECO:0000256" key="2">
    <source>
        <dbReference type="SAM" id="MobiDB-lite"/>
    </source>
</evidence>
<evidence type="ECO:0000305" key="3"/>
<accession>A5EX81</accession>
<reference key="1">
    <citation type="journal article" date="2007" name="Nat. Biotechnol.">
        <title>Genome sequence and identification of candidate vaccine antigens from the animal pathogen Dichelobacter nodosus.</title>
        <authorList>
            <person name="Myers G.S.A."/>
            <person name="Parker D."/>
            <person name="Al-Hasani K."/>
            <person name="Kennan R.M."/>
            <person name="Seemann T."/>
            <person name="Ren Q."/>
            <person name="Badger J.H."/>
            <person name="Selengut J.D."/>
            <person name="Deboy R.T."/>
            <person name="Tettelin H."/>
            <person name="Boyce J.D."/>
            <person name="McCarl V.P."/>
            <person name="Han X."/>
            <person name="Nelson W.C."/>
            <person name="Madupu R."/>
            <person name="Mohamoud Y."/>
            <person name="Holley T."/>
            <person name="Fedorova N."/>
            <person name="Khouri H."/>
            <person name="Bottomley S.P."/>
            <person name="Whittington R.J."/>
            <person name="Adler B."/>
            <person name="Songer J.G."/>
            <person name="Rood J.I."/>
            <person name="Paulsen I.T."/>
        </authorList>
    </citation>
    <scope>NUCLEOTIDE SEQUENCE [LARGE SCALE GENOMIC DNA]</scope>
    <source>
        <strain>VCS1703A</strain>
    </source>
</reference>
<keyword id="KW-1185">Reference proteome</keyword>
<keyword id="KW-0687">Ribonucleoprotein</keyword>
<keyword id="KW-0689">Ribosomal protein</keyword>
<keyword id="KW-0694">RNA-binding</keyword>
<keyword id="KW-0699">rRNA-binding</keyword>
<gene>
    <name evidence="1" type="primary">rplD</name>
    <name type="ordered locus">DNO_1274</name>
</gene>
<proteinExistence type="inferred from homology"/>
<comment type="function">
    <text evidence="1">One of the primary rRNA binding proteins, this protein initially binds near the 5'-end of the 23S rRNA. It is important during the early stages of 50S assembly. It makes multiple contacts with different domains of the 23S rRNA in the assembled 50S subunit and ribosome.</text>
</comment>
<comment type="function">
    <text evidence="1">Forms part of the polypeptide exit tunnel.</text>
</comment>
<comment type="subunit">
    <text evidence="1">Part of the 50S ribosomal subunit.</text>
</comment>
<comment type="similarity">
    <text evidence="1">Belongs to the universal ribosomal protein uL4 family.</text>
</comment>
<dbReference type="EMBL" id="CP000513">
    <property type="protein sequence ID" value="ABQ14277.1"/>
    <property type="molecule type" value="Genomic_DNA"/>
</dbReference>
<dbReference type="RefSeq" id="WP_012031569.1">
    <property type="nucleotide sequence ID" value="NC_009446.1"/>
</dbReference>
<dbReference type="SMR" id="A5EX81"/>
<dbReference type="STRING" id="246195.DNO_1274"/>
<dbReference type="KEGG" id="dno:DNO_1274"/>
<dbReference type="eggNOG" id="COG0088">
    <property type="taxonomic scope" value="Bacteria"/>
</dbReference>
<dbReference type="HOGENOM" id="CLU_041575_5_2_6"/>
<dbReference type="OrthoDB" id="9803201at2"/>
<dbReference type="Proteomes" id="UP000000248">
    <property type="component" value="Chromosome"/>
</dbReference>
<dbReference type="GO" id="GO:1990904">
    <property type="term" value="C:ribonucleoprotein complex"/>
    <property type="evidence" value="ECO:0007669"/>
    <property type="project" value="UniProtKB-KW"/>
</dbReference>
<dbReference type="GO" id="GO:0005840">
    <property type="term" value="C:ribosome"/>
    <property type="evidence" value="ECO:0007669"/>
    <property type="project" value="UniProtKB-KW"/>
</dbReference>
<dbReference type="GO" id="GO:0019843">
    <property type="term" value="F:rRNA binding"/>
    <property type="evidence" value="ECO:0007669"/>
    <property type="project" value="UniProtKB-UniRule"/>
</dbReference>
<dbReference type="GO" id="GO:0003735">
    <property type="term" value="F:structural constituent of ribosome"/>
    <property type="evidence" value="ECO:0007669"/>
    <property type="project" value="InterPro"/>
</dbReference>
<dbReference type="GO" id="GO:0006412">
    <property type="term" value="P:translation"/>
    <property type="evidence" value="ECO:0007669"/>
    <property type="project" value="UniProtKB-UniRule"/>
</dbReference>
<dbReference type="Gene3D" id="3.40.1370.10">
    <property type="match status" value="1"/>
</dbReference>
<dbReference type="HAMAP" id="MF_01328_B">
    <property type="entry name" value="Ribosomal_uL4_B"/>
    <property type="match status" value="1"/>
</dbReference>
<dbReference type="InterPro" id="IPR002136">
    <property type="entry name" value="Ribosomal_uL4"/>
</dbReference>
<dbReference type="InterPro" id="IPR013005">
    <property type="entry name" value="Ribosomal_uL4-like"/>
</dbReference>
<dbReference type="InterPro" id="IPR023574">
    <property type="entry name" value="Ribosomal_uL4_dom_sf"/>
</dbReference>
<dbReference type="NCBIfam" id="TIGR03953">
    <property type="entry name" value="rplD_bact"/>
    <property type="match status" value="1"/>
</dbReference>
<dbReference type="PANTHER" id="PTHR10746">
    <property type="entry name" value="50S RIBOSOMAL PROTEIN L4"/>
    <property type="match status" value="1"/>
</dbReference>
<dbReference type="PANTHER" id="PTHR10746:SF6">
    <property type="entry name" value="LARGE RIBOSOMAL SUBUNIT PROTEIN UL4M"/>
    <property type="match status" value="1"/>
</dbReference>
<dbReference type="Pfam" id="PF00573">
    <property type="entry name" value="Ribosomal_L4"/>
    <property type="match status" value="1"/>
</dbReference>
<dbReference type="SUPFAM" id="SSF52166">
    <property type="entry name" value="Ribosomal protein L4"/>
    <property type="match status" value="1"/>
</dbReference>
<sequence>MEIQFTNTADRISVADSVFSAAYNEPLIHQVVVAYLAGARQGTKAQKTKAEVSGGGVKPWKQKGTGRARAGSIRSPLWRTGGKIFAAKPRSYVQKVNRKMYRSALCSIFSELNRIGRFIAVNALELTEPKTKSFLKLMQDHAFGDDLLLITESENINIFLASRNLPNVTVIDVQEINPALLLKHEKVIVDKAALEKINEWLS</sequence>